<feature type="signal peptide" evidence="1">
    <location>
        <begin position="1"/>
        <end position="19"/>
    </location>
</feature>
<feature type="chain" id="PRO_0000364197" description="Calumenin">
    <location>
        <begin position="20"/>
        <end position="315"/>
    </location>
</feature>
<feature type="domain" description="EF-hand 1" evidence="4">
    <location>
        <begin position="68"/>
        <end position="103"/>
    </location>
</feature>
<feature type="domain" description="EF-hand 2" evidence="4">
    <location>
        <begin position="104"/>
        <end position="139"/>
    </location>
</feature>
<feature type="domain" description="EF-hand 3" evidence="4">
    <location>
        <begin position="151"/>
        <end position="186"/>
    </location>
</feature>
<feature type="domain" description="EF-hand 4" evidence="4">
    <location>
        <begin position="188"/>
        <end position="223"/>
    </location>
</feature>
<feature type="domain" description="EF-hand 5" evidence="4">
    <location>
        <begin position="229"/>
        <end position="264"/>
    </location>
</feature>
<feature type="domain" description="EF-hand 6" evidence="4">
    <location>
        <begin position="265"/>
        <end position="300"/>
    </location>
</feature>
<feature type="short sequence motif" description="Prevents secretion from ER" evidence="1">
    <location>
        <begin position="312"/>
        <end position="315"/>
    </location>
</feature>
<feature type="binding site" evidence="4">
    <location>
        <position position="81"/>
    </location>
    <ligand>
        <name>Ca(2+)</name>
        <dbReference type="ChEBI" id="CHEBI:29108"/>
        <label>1</label>
    </ligand>
</feature>
<feature type="binding site" evidence="4">
    <location>
        <position position="83"/>
    </location>
    <ligand>
        <name>Ca(2+)</name>
        <dbReference type="ChEBI" id="CHEBI:29108"/>
        <label>1</label>
    </ligand>
</feature>
<feature type="binding site" evidence="4">
    <location>
        <position position="85"/>
    </location>
    <ligand>
        <name>Ca(2+)</name>
        <dbReference type="ChEBI" id="CHEBI:29108"/>
        <label>1</label>
    </ligand>
</feature>
<feature type="binding site" evidence="4">
    <location>
        <position position="87"/>
    </location>
    <ligand>
        <name>Ca(2+)</name>
        <dbReference type="ChEBI" id="CHEBI:29108"/>
        <label>1</label>
    </ligand>
</feature>
<feature type="binding site" evidence="4">
    <location>
        <position position="92"/>
    </location>
    <ligand>
        <name>Ca(2+)</name>
        <dbReference type="ChEBI" id="CHEBI:29108"/>
        <label>1</label>
    </ligand>
</feature>
<feature type="binding site" evidence="4">
    <location>
        <position position="117"/>
    </location>
    <ligand>
        <name>Ca(2+)</name>
        <dbReference type="ChEBI" id="CHEBI:29108"/>
        <label>2</label>
    </ligand>
</feature>
<feature type="binding site" evidence="4">
    <location>
        <position position="119"/>
    </location>
    <ligand>
        <name>Ca(2+)</name>
        <dbReference type="ChEBI" id="CHEBI:29108"/>
        <label>2</label>
    </ligand>
</feature>
<feature type="binding site" evidence="4">
    <location>
        <position position="121"/>
    </location>
    <ligand>
        <name>Ca(2+)</name>
        <dbReference type="ChEBI" id="CHEBI:29108"/>
        <label>2</label>
    </ligand>
</feature>
<feature type="binding site" evidence="4">
    <location>
        <position position="128"/>
    </location>
    <ligand>
        <name>Ca(2+)</name>
        <dbReference type="ChEBI" id="CHEBI:29108"/>
        <label>2</label>
    </ligand>
</feature>
<feature type="binding site" evidence="5">
    <location>
        <position position="164"/>
    </location>
    <ligand>
        <name>Ca(2+)</name>
        <dbReference type="ChEBI" id="CHEBI:29108"/>
        <label>3</label>
    </ligand>
</feature>
<feature type="binding site" evidence="5">
    <location>
        <position position="166"/>
    </location>
    <ligand>
        <name>Ca(2+)</name>
        <dbReference type="ChEBI" id="CHEBI:29108"/>
        <label>3</label>
    </ligand>
</feature>
<feature type="binding site" evidence="5">
    <location>
        <position position="168"/>
    </location>
    <ligand>
        <name>Ca(2+)</name>
        <dbReference type="ChEBI" id="CHEBI:29108"/>
        <label>3</label>
    </ligand>
</feature>
<feature type="binding site" evidence="5">
    <location>
        <position position="175"/>
    </location>
    <ligand>
        <name>Ca(2+)</name>
        <dbReference type="ChEBI" id="CHEBI:29108"/>
        <label>3</label>
    </ligand>
</feature>
<feature type="binding site" evidence="4">
    <location>
        <position position="201"/>
    </location>
    <ligand>
        <name>Ca(2+)</name>
        <dbReference type="ChEBI" id="CHEBI:29108"/>
        <label>4</label>
    </ligand>
</feature>
<feature type="binding site" evidence="4">
    <location>
        <position position="203"/>
    </location>
    <ligand>
        <name>Ca(2+)</name>
        <dbReference type="ChEBI" id="CHEBI:29108"/>
        <label>4</label>
    </ligand>
</feature>
<feature type="binding site" evidence="4">
    <location>
        <position position="205"/>
    </location>
    <ligand>
        <name>Ca(2+)</name>
        <dbReference type="ChEBI" id="CHEBI:29108"/>
        <label>4</label>
    </ligand>
</feature>
<feature type="binding site" evidence="4">
    <location>
        <position position="212"/>
    </location>
    <ligand>
        <name>Ca(2+)</name>
        <dbReference type="ChEBI" id="CHEBI:29108"/>
        <label>4</label>
    </ligand>
</feature>
<feature type="binding site" evidence="5">
    <location>
        <position position="242"/>
    </location>
    <ligand>
        <name>Ca(2+)</name>
        <dbReference type="ChEBI" id="CHEBI:29108"/>
        <label>5</label>
    </ligand>
</feature>
<feature type="binding site" evidence="5">
    <location>
        <position position="244"/>
    </location>
    <ligand>
        <name>Ca(2+)</name>
        <dbReference type="ChEBI" id="CHEBI:29108"/>
        <label>5</label>
    </ligand>
</feature>
<feature type="binding site" evidence="5">
    <location>
        <position position="246"/>
    </location>
    <ligand>
        <name>Ca(2+)</name>
        <dbReference type="ChEBI" id="CHEBI:29108"/>
        <label>5</label>
    </ligand>
</feature>
<feature type="binding site" evidence="5">
    <location>
        <position position="248"/>
    </location>
    <ligand>
        <name>Ca(2+)</name>
        <dbReference type="ChEBI" id="CHEBI:29108"/>
        <label>5</label>
    </ligand>
</feature>
<feature type="binding site" evidence="5">
    <location>
        <position position="253"/>
    </location>
    <ligand>
        <name>Ca(2+)</name>
        <dbReference type="ChEBI" id="CHEBI:29108"/>
        <label>5</label>
    </ligand>
</feature>
<feature type="binding site" evidence="4">
    <location>
        <position position="278"/>
    </location>
    <ligand>
        <name>Ca(2+)</name>
        <dbReference type="ChEBI" id="CHEBI:29108"/>
        <label>6</label>
    </ligand>
</feature>
<feature type="binding site" evidence="4">
    <location>
        <position position="280"/>
    </location>
    <ligand>
        <name>Ca(2+)</name>
        <dbReference type="ChEBI" id="CHEBI:29108"/>
        <label>6</label>
    </ligand>
</feature>
<feature type="binding site" evidence="4">
    <location>
        <position position="282"/>
    </location>
    <ligand>
        <name>Ca(2+)</name>
        <dbReference type="ChEBI" id="CHEBI:29108"/>
        <label>6</label>
    </ligand>
</feature>
<feature type="binding site" evidence="4">
    <location>
        <position position="284"/>
    </location>
    <ligand>
        <name>Ca(2+)</name>
        <dbReference type="ChEBI" id="CHEBI:29108"/>
        <label>6</label>
    </ligand>
</feature>
<feature type="binding site" evidence="4">
    <location>
        <position position="289"/>
    </location>
    <ligand>
        <name>Ca(2+)</name>
        <dbReference type="ChEBI" id="CHEBI:29108"/>
        <label>6</label>
    </ligand>
</feature>
<feature type="glycosylation site" description="N-linked (GlcNAc...) asparagine" evidence="3">
    <location>
        <position position="131"/>
    </location>
</feature>
<gene>
    <name type="primary">calu</name>
</gene>
<proteinExistence type="evidence at transcript level"/>
<comment type="function">
    <text evidence="1">Involved in regulation of vitamin K-dependent carboxylation of multiple N-terminal glutamate residues. Seems to inhibit gamma-carboxylase ggcx. Binds 7 calcium ions with a low affinity (By similarity).</text>
</comment>
<comment type="subunit">
    <text evidence="1">Interacts with ggcx.</text>
</comment>
<comment type="subcellular location">
    <subcellularLocation>
        <location evidence="2">Endoplasmic reticulum membrane</location>
    </subcellularLocation>
    <subcellularLocation>
        <location evidence="2">Golgi apparatus</location>
    </subcellularLocation>
    <subcellularLocation>
        <location evidence="2">Secreted</location>
    </subcellularLocation>
    <subcellularLocation>
        <location evidence="2">Melanosome</location>
    </subcellularLocation>
    <subcellularLocation>
        <location evidence="2">Sarcoplasmic reticulum lumen</location>
    </subcellularLocation>
</comment>
<comment type="similarity">
    <text evidence="5">Belongs to the CREC family.</text>
</comment>
<accession>Q6IP82</accession>
<protein>
    <recommendedName>
        <fullName>Calumenin</fullName>
    </recommendedName>
</protein>
<dbReference type="EMBL" id="BC072035">
    <property type="protein sequence ID" value="AAH72035.1"/>
    <property type="molecule type" value="mRNA"/>
</dbReference>
<dbReference type="RefSeq" id="NP_001085142.1">
    <property type="nucleotide sequence ID" value="NM_001091673.1"/>
</dbReference>
<dbReference type="GlyCosmos" id="Q6IP82">
    <property type="glycosylation" value="1 site, No reported glycans"/>
</dbReference>
<dbReference type="DNASU" id="432220"/>
<dbReference type="GeneID" id="432220"/>
<dbReference type="KEGG" id="xla:432220"/>
<dbReference type="AGR" id="Xenbase:XB-GENE-6255748"/>
<dbReference type="CTD" id="432220"/>
<dbReference type="Xenbase" id="XB-GENE-6255748">
    <property type="gene designation" value="calu.L"/>
</dbReference>
<dbReference type="OMA" id="PLSNKEH"/>
<dbReference type="OrthoDB" id="293868at2759"/>
<dbReference type="Proteomes" id="UP000186698">
    <property type="component" value="Chromosome 3L"/>
</dbReference>
<dbReference type="Bgee" id="432220">
    <property type="expression patterns" value="Expressed in internal ear and 19 other cell types or tissues"/>
</dbReference>
<dbReference type="GO" id="GO:0005783">
    <property type="term" value="C:endoplasmic reticulum"/>
    <property type="evidence" value="ECO:0000318"/>
    <property type="project" value="GO_Central"/>
</dbReference>
<dbReference type="GO" id="GO:0005789">
    <property type="term" value="C:endoplasmic reticulum membrane"/>
    <property type="evidence" value="ECO:0007669"/>
    <property type="project" value="UniProtKB-SubCell"/>
</dbReference>
<dbReference type="GO" id="GO:0005576">
    <property type="term" value="C:extracellular region"/>
    <property type="evidence" value="ECO:0007669"/>
    <property type="project" value="UniProtKB-SubCell"/>
</dbReference>
<dbReference type="GO" id="GO:0005794">
    <property type="term" value="C:Golgi apparatus"/>
    <property type="evidence" value="ECO:0007669"/>
    <property type="project" value="UniProtKB-SubCell"/>
</dbReference>
<dbReference type="GO" id="GO:0042470">
    <property type="term" value="C:melanosome"/>
    <property type="evidence" value="ECO:0007669"/>
    <property type="project" value="UniProtKB-SubCell"/>
</dbReference>
<dbReference type="GO" id="GO:0033018">
    <property type="term" value="C:sarcoplasmic reticulum lumen"/>
    <property type="evidence" value="ECO:0007669"/>
    <property type="project" value="UniProtKB-SubCell"/>
</dbReference>
<dbReference type="GO" id="GO:0005509">
    <property type="term" value="F:calcium ion binding"/>
    <property type="evidence" value="ECO:0000318"/>
    <property type="project" value="GO_Central"/>
</dbReference>
<dbReference type="CDD" id="cd16228">
    <property type="entry name" value="EFh_CREC_Calumenin"/>
    <property type="match status" value="1"/>
</dbReference>
<dbReference type="FunFam" id="1.10.238.10:FF:000090">
    <property type="entry name" value="calumenin isoform X2"/>
    <property type="match status" value="1"/>
</dbReference>
<dbReference type="FunFam" id="1.10.238.10:FF:000109">
    <property type="entry name" value="calumenin isoform X2"/>
    <property type="match status" value="1"/>
</dbReference>
<dbReference type="FunFam" id="1.10.238.10:FF:000110">
    <property type="entry name" value="calumenin isoform X2"/>
    <property type="match status" value="1"/>
</dbReference>
<dbReference type="Gene3D" id="1.10.238.10">
    <property type="entry name" value="EF-hand"/>
    <property type="match status" value="2"/>
</dbReference>
<dbReference type="InterPro" id="IPR011992">
    <property type="entry name" value="EF-hand-dom_pair"/>
</dbReference>
<dbReference type="InterPro" id="IPR018247">
    <property type="entry name" value="EF_Hand_1_Ca_BS"/>
</dbReference>
<dbReference type="InterPro" id="IPR002048">
    <property type="entry name" value="EF_hand_dom"/>
</dbReference>
<dbReference type="PANTHER" id="PTHR10827:SF76">
    <property type="entry name" value="CALUMENIN"/>
    <property type="match status" value="1"/>
</dbReference>
<dbReference type="PANTHER" id="PTHR10827">
    <property type="entry name" value="RETICULOCALBIN"/>
    <property type="match status" value="1"/>
</dbReference>
<dbReference type="Pfam" id="PF13499">
    <property type="entry name" value="EF-hand_7"/>
    <property type="match status" value="2"/>
</dbReference>
<dbReference type="Pfam" id="PF13833">
    <property type="entry name" value="EF-hand_8"/>
    <property type="match status" value="1"/>
</dbReference>
<dbReference type="SMART" id="SM00054">
    <property type="entry name" value="EFh"/>
    <property type="match status" value="5"/>
</dbReference>
<dbReference type="SUPFAM" id="SSF47473">
    <property type="entry name" value="EF-hand"/>
    <property type="match status" value="2"/>
</dbReference>
<dbReference type="PROSITE" id="PS00018">
    <property type="entry name" value="EF_HAND_1"/>
    <property type="match status" value="4"/>
</dbReference>
<dbReference type="PROSITE" id="PS50222">
    <property type="entry name" value="EF_HAND_2"/>
    <property type="match status" value="6"/>
</dbReference>
<reference key="1">
    <citation type="submission" date="2004-06" db="EMBL/GenBank/DDBJ databases">
        <authorList>
            <consortium name="NIH - Xenopus Gene Collection (XGC) project"/>
        </authorList>
    </citation>
    <scope>NUCLEOTIDE SEQUENCE [LARGE SCALE MRNA]</scope>
    <source>
        <tissue>Embryo</tissue>
    </source>
</reference>
<keyword id="KW-0106">Calcium</keyword>
<keyword id="KW-0256">Endoplasmic reticulum</keyword>
<keyword id="KW-0325">Glycoprotein</keyword>
<keyword id="KW-0333">Golgi apparatus</keyword>
<keyword id="KW-0472">Membrane</keyword>
<keyword id="KW-0479">Metal-binding</keyword>
<keyword id="KW-1185">Reference proteome</keyword>
<keyword id="KW-0677">Repeat</keyword>
<keyword id="KW-0703">Sarcoplasmic reticulum</keyword>
<keyword id="KW-0964">Secreted</keyword>
<keyword id="KW-0732">Signal</keyword>
<organism>
    <name type="scientific">Xenopus laevis</name>
    <name type="common">African clawed frog</name>
    <dbReference type="NCBI Taxonomy" id="8355"/>
    <lineage>
        <taxon>Eukaryota</taxon>
        <taxon>Metazoa</taxon>
        <taxon>Chordata</taxon>
        <taxon>Craniata</taxon>
        <taxon>Vertebrata</taxon>
        <taxon>Euteleostomi</taxon>
        <taxon>Amphibia</taxon>
        <taxon>Batrachia</taxon>
        <taxon>Anura</taxon>
        <taxon>Pipoidea</taxon>
        <taxon>Pipidae</taxon>
        <taxon>Xenopodinae</taxon>
        <taxon>Xenopus</taxon>
        <taxon>Xenopus</taxon>
    </lineage>
</organism>
<name>CALU_XENLA</name>
<evidence type="ECO:0000250" key="1"/>
<evidence type="ECO:0000250" key="2">
    <source>
        <dbReference type="UniProtKB" id="O43852"/>
    </source>
</evidence>
<evidence type="ECO:0000255" key="3"/>
<evidence type="ECO:0000255" key="4">
    <source>
        <dbReference type="PROSITE-ProRule" id="PRU00448"/>
    </source>
</evidence>
<evidence type="ECO:0000305" key="5"/>
<sequence length="315" mass="37056">MNKRPLLLCLGLWVACTLSKPTEKKDRVHHDSQLSDKVHDDAQNFDYDHDAFLGAEDAKTFDQLTPEESKERLGMIVGKIDLDNDGYVTEGELTAWIKKAQKKYVYDNVERQWQEFDLSQDGLVSWDEYRNVTYGTYLDDQDPDNSFNYKQMMIRDERRFKMADKDGDLVATKEEFTAFLHPEEFDYMKDIVVLETMEDIDKNGDGLIDLEEYIGDMYNHDGDANEPEWVKTEREQFMEFRDKNHDGKMDKEETKDWILPSDYDHSEAESRHLVYESDHNQDGKLTREEIVDKYDLFVGSQATDFGEALVRHDEF</sequence>